<proteinExistence type="inferred from homology"/>
<gene>
    <name type="primary">yeaG</name>
    <name type="ordered locus">Z2823</name>
    <name type="ordered locus">ECs2492</name>
</gene>
<organism>
    <name type="scientific">Escherichia coli O157:H7</name>
    <dbReference type="NCBI Taxonomy" id="83334"/>
    <lineage>
        <taxon>Bacteria</taxon>
        <taxon>Pseudomonadati</taxon>
        <taxon>Pseudomonadota</taxon>
        <taxon>Gammaproteobacteria</taxon>
        <taxon>Enterobacterales</taxon>
        <taxon>Enterobacteriaceae</taxon>
        <taxon>Escherichia</taxon>
    </lineage>
</organism>
<accession>P0ACY5</accession>
<accession>O07963</accession>
<accession>P77391</accession>
<feature type="chain" id="PRO_0000169013" description="Serine/threonine kinase YeaG">
    <location>
        <begin position="1"/>
        <end position="644"/>
    </location>
</feature>
<keyword id="KW-0963">Cytoplasm</keyword>
<keyword id="KW-0418">Kinase</keyword>
<keyword id="KW-1185">Reference proteome</keyword>
<keyword id="KW-0346">Stress response</keyword>
<keyword id="KW-0808">Transferase</keyword>
<sequence length="644" mass="74480">MNIFDHYRQRYEAAKDEEFTLQEFLTTCRQDRSAYANAAERLLMAIGEPVMVDTAQEPRLSRLFSNRVIARYPAFEEFYGMEDAIEQIVSYLKHAAQGLEEKKQILYLLGPVGGGKSSLAERLKSLMQLVPIYVLSANGERSPVNDHPFCLFNPQEDAQILEKEYGIPRRYLGTIMSPWAAKRLHEFGGDITKFRVVKVWPSILQQIAIAKTEPGDENNQDISALVGKVDIRKLEHYAQNDPDAYGYSGALCRANQGIMEFVEMFKAPIKVLHPLLTATQEGNYNGTEGISALPFNGIILAHSNESEWVTFRNNKNNEAFLDRVYIVKVPYCLRISEEIKIYEKLLNHSELTHAPCAPGTLETLSRFSILSRLKEPENSSIYSKMRVYDGESLKDTDPKAKSYQEYRDYAGVDEGMNGLSTRFAFKILSRVFNFDHVEVAANPVHLFYVLEQQIEREQFPQEQAERYLEFLKGYLIPKYAEFIGKEIQTAYLESYSEYGQNIFDRYVTYADFWIQDQEYRDPDTGQLFDRESLNAELEKIEKPAGISNPKDFRNEIVNFVLRARANNSGRNPNWTSYEKLRTVIEKKMFSNTEELLPVISFNAKTSTDEQKKHDDFVDRMMEKGYTRKQVRLLCEWYLRVRKSS</sequence>
<comment type="function">
    <text evidence="1">Kinase that plays a role in the adaptation to sustained nitrogen starvation.</text>
</comment>
<comment type="catalytic activity">
    <reaction evidence="1">
        <text>L-seryl-[protein] + ATP = O-phospho-L-seryl-[protein] + ADP + H(+)</text>
        <dbReference type="Rhea" id="RHEA:17989"/>
        <dbReference type="Rhea" id="RHEA-COMP:9863"/>
        <dbReference type="Rhea" id="RHEA-COMP:11604"/>
        <dbReference type="ChEBI" id="CHEBI:15378"/>
        <dbReference type="ChEBI" id="CHEBI:29999"/>
        <dbReference type="ChEBI" id="CHEBI:30616"/>
        <dbReference type="ChEBI" id="CHEBI:83421"/>
        <dbReference type="ChEBI" id="CHEBI:456216"/>
        <dbReference type="EC" id="2.7.11.1"/>
    </reaction>
</comment>
<comment type="catalytic activity">
    <reaction evidence="1">
        <text>L-threonyl-[protein] + ATP = O-phospho-L-threonyl-[protein] + ADP + H(+)</text>
        <dbReference type="Rhea" id="RHEA:46608"/>
        <dbReference type="Rhea" id="RHEA-COMP:11060"/>
        <dbReference type="Rhea" id="RHEA-COMP:11605"/>
        <dbReference type="ChEBI" id="CHEBI:15378"/>
        <dbReference type="ChEBI" id="CHEBI:30013"/>
        <dbReference type="ChEBI" id="CHEBI:30616"/>
        <dbReference type="ChEBI" id="CHEBI:61977"/>
        <dbReference type="ChEBI" id="CHEBI:456216"/>
        <dbReference type="EC" id="2.7.11.1"/>
    </reaction>
</comment>
<comment type="subunit">
    <text evidence="1">Monomer.</text>
</comment>
<comment type="subcellular location">
    <subcellularLocation>
        <location evidence="1">Cytoplasm</location>
    </subcellularLocation>
</comment>
<comment type="similarity">
    <text evidence="2">Belongs to the PrkA family.</text>
</comment>
<dbReference type="EC" id="2.7.11.1" evidence="1"/>
<dbReference type="EMBL" id="AE005174">
    <property type="protein sequence ID" value="AAG56772.1"/>
    <property type="molecule type" value="Genomic_DNA"/>
</dbReference>
<dbReference type="EMBL" id="BA000007">
    <property type="protein sequence ID" value="BAB35915.1"/>
    <property type="molecule type" value="Genomic_DNA"/>
</dbReference>
<dbReference type="PIR" id="D90940">
    <property type="entry name" value="D90940"/>
</dbReference>
<dbReference type="PIR" id="H85788">
    <property type="entry name" value="H85788"/>
</dbReference>
<dbReference type="RefSeq" id="NP_310519.1">
    <property type="nucleotide sequence ID" value="NC_002695.1"/>
</dbReference>
<dbReference type="RefSeq" id="WP_001019882.1">
    <property type="nucleotide sequence ID" value="NZ_VOAI01000010.1"/>
</dbReference>
<dbReference type="STRING" id="155864.Z2823"/>
<dbReference type="GeneID" id="86946181"/>
<dbReference type="GeneID" id="913722"/>
<dbReference type="KEGG" id="ece:Z2823"/>
<dbReference type="KEGG" id="ecs:ECs_2492"/>
<dbReference type="PATRIC" id="fig|386585.9.peg.2609"/>
<dbReference type="eggNOG" id="COG2766">
    <property type="taxonomic scope" value="Bacteria"/>
</dbReference>
<dbReference type="HOGENOM" id="CLU_028588_1_0_6"/>
<dbReference type="OMA" id="DFYGMED"/>
<dbReference type="Proteomes" id="UP000000558">
    <property type="component" value="Chromosome"/>
</dbReference>
<dbReference type="Proteomes" id="UP000002519">
    <property type="component" value="Chromosome"/>
</dbReference>
<dbReference type="GO" id="GO:0004672">
    <property type="term" value="F:protein kinase activity"/>
    <property type="evidence" value="ECO:0007669"/>
    <property type="project" value="InterPro"/>
</dbReference>
<dbReference type="FunFam" id="3.40.50.300:FF:000609">
    <property type="entry name" value="PrkA family serine protein kinase"/>
    <property type="match status" value="1"/>
</dbReference>
<dbReference type="Gene3D" id="3.40.50.300">
    <property type="entry name" value="P-loop containing nucleotide triphosphate hydrolases"/>
    <property type="match status" value="1"/>
</dbReference>
<dbReference type="InterPro" id="IPR027417">
    <property type="entry name" value="P-loop_NTPase"/>
</dbReference>
<dbReference type="InterPro" id="IPR013153">
    <property type="entry name" value="Prk_AAA_dom"/>
</dbReference>
<dbReference type="InterPro" id="IPR010650">
    <property type="entry name" value="PrkA_C_dom"/>
</dbReference>
<dbReference type="InterPro" id="IPR016230">
    <property type="entry name" value="Ser_kinase_PrkA"/>
</dbReference>
<dbReference type="NCBIfam" id="NF011999">
    <property type="entry name" value="PRK15455.1"/>
    <property type="match status" value="1"/>
</dbReference>
<dbReference type="PANTHER" id="PTHR30267">
    <property type="entry name" value="PROTEIN KINASE PRKA"/>
    <property type="match status" value="1"/>
</dbReference>
<dbReference type="PANTHER" id="PTHR30267:SF2">
    <property type="entry name" value="PROTEIN PRKA"/>
    <property type="match status" value="1"/>
</dbReference>
<dbReference type="Pfam" id="PF08298">
    <property type="entry name" value="AAA_PrkA"/>
    <property type="match status" value="1"/>
</dbReference>
<dbReference type="Pfam" id="PF06798">
    <property type="entry name" value="PrkA"/>
    <property type="match status" value="1"/>
</dbReference>
<dbReference type="PIRSF" id="PIRSF000549">
    <property type="entry name" value="Ser_prot_kin"/>
    <property type="match status" value="1"/>
</dbReference>
<dbReference type="SMART" id="SM00763">
    <property type="entry name" value="AAA_PrkA"/>
    <property type="match status" value="1"/>
</dbReference>
<dbReference type="SUPFAM" id="SSF52540">
    <property type="entry name" value="P-loop containing nucleoside triphosphate hydrolases"/>
    <property type="match status" value="1"/>
</dbReference>
<protein>
    <recommendedName>
        <fullName evidence="1">Serine/threonine kinase YeaG</fullName>
        <shortName evidence="1">Ser/Thr kinase YeaG</shortName>
        <ecNumber evidence="1">2.7.11.1</ecNumber>
    </recommendedName>
</protein>
<evidence type="ECO:0000250" key="1">
    <source>
        <dbReference type="UniProtKB" id="P0ACY3"/>
    </source>
</evidence>
<evidence type="ECO:0000305" key="2"/>
<name>YEAG_ECO57</name>
<reference key="1">
    <citation type="journal article" date="2001" name="Nature">
        <title>Genome sequence of enterohaemorrhagic Escherichia coli O157:H7.</title>
        <authorList>
            <person name="Perna N.T."/>
            <person name="Plunkett G. III"/>
            <person name="Burland V."/>
            <person name="Mau B."/>
            <person name="Glasner J.D."/>
            <person name="Rose D.J."/>
            <person name="Mayhew G.F."/>
            <person name="Evans P.S."/>
            <person name="Gregor J."/>
            <person name="Kirkpatrick H.A."/>
            <person name="Posfai G."/>
            <person name="Hackett J."/>
            <person name="Klink S."/>
            <person name="Boutin A."/>
            <person name="Shao Y."/>
            <person name="Miller L."/>
            <person name="Grotbeck E.J."/>
            <person name="Davis N.W."/>
            <person name="Lim A."/>
            <person name="Dimalanta E.T."/>
            <person name="Potamousis K."/>
            <person name="Apodaca J."/>
            <person name="Anantharaman T.S."/>
            <person name="Lin J."/>
            <person name="Yen G."/>
            <person name="Schwartz D.C."/>
            <person name="Welch R.A."/>
            <person name="Blattner F.R."/>
        </authorList>
    </citation>
    <scope>NUCLEOTIDE SEQUENCE [LARGE SCALE GENOMIC DNA]</scope>
    <source>
        <strain>O157:H7 / EDL933 / ATCC 700927 / EHEC</strain>
    </source>
</reference>
<reference key="2">
    <citation type="journal article" date="2001" name="DNA Res.">
        <title>Complete genome sequence of enterohemorrhagic Escherichia coli O157:H7 and genomic comparison with a laboratory strain K-12.</title>
        <authorList>
            <person name="Hayashi T."/>
            <person name="Makino K."/>
            <person name="Ohnishi M."/>
            <person name="Kurokawa K."/>
            <person name="Ishii K."/>
            <person name="Yokoyama K."/>
            <person name="Han C.-G."/>
            <person name="Ohtsubo E."/>
            <person name="Nakayama K."/>
            <person name="Murata T."/>
            <person name="Tanaka M."/>
            <person name="Tobe T."/>
            <person name="Iida T."/>
            <person name="Takami H."/>
            <person name="Honda T."/>
            <person name="Sasakawa C."/>
            <person name="Ogasawara N."/>
            <person name="Yasunaga T."/>
            <person name="Kuhara S."/>
            <person name="Shiba T."/>
            <person name="Hattori M."/>
            <person name="Shinagawa H."/>
        </authorList>
    </citation>
    <scope>NUCLEOTIDE SEQUENCE [LARGE SCALE GENOMIC DNA]</scope>
    <source>
        <strain>O157:H7 / Sakai / RIMD 0509952 / EHEC</strain>
    </source>
</reference>